<name>YNGA_BACSU</name>
<dbReference type="EMBL" id="AL009126">
    <property type="protein sequence ID" value="CAB13700.1"/>
    <property type="molecule type" value="Genomic_DNA"/>
</dbReference>
<dbReference type="PIR" id="F69892">
    <property type="entry name" value="F69892"/>
</dbReference>
<dbReference type="RefSeq" id="NP_389699.1">
    <property type="nucleotide sequence ID" value="NC_000964.3"/>
</dbReference>
<dbReference type="RefSeq" id="WP_003231531.1">
    <property type="nucleotide sequence ID" value="NZ_OZ025638.1"/>
</dbReference>
<dbReference type="SMR" id="O31821"/>
<dbReference type="FunCoup" id="O31821">
    <property type="interactions" value="54"/>
</dbReference>
<dbReference type="STRING" id="224308.BSU18170"/>
<dbReference type="PaxDb" id="224308-BSU18170"/>
<dbReference type="EnsemblBacteria" id="CAB13700">
    <property type="protein sequence ID" value="CAB13700"/>
    <property type="gene ID" value="BSU_18170"/>
</dbReference>
<dbReference type="GeneID" id="936300"/>
<dbReference type="KEGG" id="bsu:BSU18170"/>
<dbReference type="PATRIC" id="fig|224308.43.peg.1926"/>
<dbReference type="eggNOG" id="COG2246">
    <property type="taxonomic scope" value="Bacteria"/>
</dbReference>
<dbReference type="InParanoid" id="O31821"/>
<dbReference type="OrthoDB" id="9812049at2"/>
<dbReference type="BioCyc" id="BSUB:BSU18170-MONOMER"/>
<dbReference type="Proteomes" id="UP000001570">
    <property type="component" value="Chromosome"/>
</dbReference>
<dbReference type="GO" id="GO:0005886">
    <property type="term" value="C:plasma membrane"/>
    <property type="evidence" value="ECO:0000318"/>
    <property type="project" value="GO_Central"/>
</dbReference>
<dbReference type="GO" id="GO:0000271">
    <property type="term" value="P:polysaccharide biosynthetic process"/>
    <property type="evidence" value="ECO:0007669"/>
    <property type="project" value="InterPro"/>
</dbReference>
<dbReference type="InterPro" id="IPR051401">
    <property type="entry name" value="GtrA_CellWall_Glycosyl"/>
</dbReference>
<dbReference type="InterPro" id="IPR007267">
    <property type="entry name" value="GtrA_DPMS_TM"/>
</dbReference>
<dbReference type="PANTHER" id="PTHR38459">
    <property type="entry name" value="PROPHAGE BACTOPRENOL-LINKED GLUCOSE TRANSLOCASE HOMOLOG"/>
    <property type="match status" value="1"/>
</dbReference>
<dbReference type="PANTHER" id="PTHR38459:SF1">
    <property type="entry name" value="PROPHAGE BACTOPRENOL-LINKED GLUCOSE TRANSLOCASE HOMOLOG"/>
    <property type="match status" value="1"/>
</dbReference>
<dbReference type="Pfam" id="PF04138">
    <property type="entry name" value="GtrA_DPMS_TM"/>
    <property type="match status" value="1"/>
</dbReference>
<organism>
    <name type="scientific">Bacillus subtilis (strain 168)</name>
    <dbReference type="NCBI Taxonomy" id="224308"/>
    <lineage>
        <taxon>Bacteria</taxon>
        <taxon>Bacillati</taxon>
        <taxon>Bacillota</taxon>
        <taxon>Bacilli</taxon>
        <taxon>Bacillales</taxon>
        <taxon>Bacillaceae</taxon>
        <taxon>Bacillus</taxon>
    </lineage>
</organism>
<protein>
    <recommendedName>
        <fullName>Uncharacterized membrane protein YngA</fullName>
    </recommendedName>
</protein>
<gene>
    <name type="primary">yngA</name>
    <name type="ordered locus">BSU18170</name>
</gene>
<accession>O31821</accession>
<sequence length="148" mass="16665">MTATRIFYEGRFVTLKEKIKTLGRFCTVGVGNTLIDFGVFFLLTACHVSYLPAQICSYTAGIVNSYVWNRNWTFCVKRKADGKEIVRFLMINIAASGITFLLLYLFQNCGCSLLVSKLAATIGGMMMNFIGNRIWVFGDSLKNIQDQE</sequence>
<keyword id="KW-1003">Cell membrane</keyword>
<keyword id="KW-0472">Membrane</keyword>
<keyword id="KW-1185">Reference proteome</keyword>
<keyword id="KW-0812">Transmembrane</keyword>
<keyword id="KW-1133">Transmembrane helix</keyword>
<proteinExistence type="inferred from homology"/>
<evidence type="ECO:0000255" key="1"/>
<evidence type="ECO:0000305" key="2"/>
<comment type="subcellular location">
    <subcellularLocation>
        <location evidence="2">Cell membrane</location>
        <topology evidence="2">Multi-pass membrane protein</topology>
    </subcellularLocation>
</comment>
<comment type="similarity">
    <text evidence="2">Belongs to the GtrA family.</text>
</comment>
<feature type="chain" id="PRO_0000378461" description="Uncharacterized membrane protein YngA">
    <location>
        <begin position="1"/>
        <end position="148"/>
    </location>
</feature>
<feature type="transmembrane region" description="Helical" evidence="1">
    <location>
        <begin position="25"/>
        <end position="45"/>
    </location>
</feature>
<feature type="transmembrane region" description="Helical" evidence="1">
    <location>
        <begin position="85"/>
        <end position="105"/>
    </location>
</feature>
<feature type="transmembrane region" description="Helical" evidence="1">
    <location>
        <begin position="118"/>
        <end position="138"/>
    </location>
</feature>
<reference key="1">
    <citation type="journal article" date="1997" name="Nature">
        <title>The complete genome sequence of the Gram-positive bacterium Bacillus subtilis.</title>
        <authorList>
            <person name="Kunst F."/>
            <person name="Ogasawara N."/>
            <person name="Moszer I."/>
            <person name="Albertini A.M."/>
            <person name="Alloni G."/>
            <person name="Azevedo V."/>
            <person name="Bertero M.G."/>
            <person name="Bessieres P."/>
            <person name="Bolotin A."/>
            <person name="Borchert S."/>
            <person name="Borriss R."/>
            <person name="Boursier L."/>
            <person name="Brans A."/>
            <person name="Braun M."/>
            <person name="Brignell S.C."/>
            <person name="Bron S."/>
            <person name="Brouillet S."/>
            <person name="Bruschi C.V."/>
            <person name="Caldwell B."/>
            <person name="Capuano V."/>
            <person name="Carter N.M."/>
            <person name="Choi S.-K."/>
            <person name="Codani J.-J."/>
            <person name="Connerton I.F."/>
            <person name="Cummings N.J."/>
            <person name="Daniel R.A."/>
            <person name="Denizot F."/>
            <person name="Devine K.M."/>
            <person name="Duesterhoeft A."/>
            <person name="Ehrlich S.D."/>
            <person name="Emmerson P.T."/>
            <person name="Entian K.-D."/>
            <person name="Errington J."/>
            <person name="Fabret C."/>
            <person name="Ferrari E."/>
            <person name="Foulger D."/>
            <person name="Fritz C."/>
            <person name="Fujita M."/>
            <person name="Fujita Y."/>
            <person name="Fuma S."/>
            <person name="Galizzi A."/>
            <person name="Galleron N."/>
            <person name="Ghim S.-Y."/>
            <person name="Glaser P."/>
            <person name="Goffeau A."/>
            <person name="Golightly E.J."/>
            <person name="Grandi G."/>
            <person name="Guiseppi G."/>
            <person name="Guy B.J."/>
            <person name="Haga K."/>
            <person name="Haiech J."/>
            <person name="Harwood C.R."/>
            <person name="Henaut A."/>
            <person name="Hilbert H."/>
            <person name="Holsappel S."/>
            <person name="Hosono S."/>
            <person name="Hullo M.-F."/>
            <person name="Itaya M."/>
            <person name="Jones L.-M."/>
            <person name="Joris B."/>
            <person name="Karamata D."/>
            <person name="Kasahara Y."/>
            <person name="Klaerr-Blanchard M."/>
            <person name="Klein C."/>
            <person name="Kobayashi Y."/>
            <person name="Koetter P."/>
            <person name="Koningstein G."/>
            <person name="Krogh S."/>
            <person name="Kumano M."/>
            <person name="Kurita K."/>
            <person name="Lapidus A."/>
            <person name="Lardinois S."/>
            <person name="Lauber J."/>
            <person name="Lazarevic V."/>
            <person name="Lee S.-M."/>
            <person name="Levine A."/>
            <person name="Liu H."/>
            <person name="Masuda S."/>
            <person name="Mauel C."/>
            <person name="Medigue C."/>
            <person name="Medina N."/>
            <person name="Mellado R.P."/>
            <person name="Mizuno M."/>
            <person name="Moestl D."/>
            <person name="Nakai S."/>
            <person name="Noback M."/>
            <person name="Noone D."/>
            <person name="O'Reilly M."/>
            <person name="Ogawa K."/>
            <person name="Ogiwara A."/>
            <person name="Oudega B."/>
            <person name="Park S.-H."/>
            <person name="Parro V."/>
            <person name="Pohl T.M."/>
            <person name="Portetelle D."/>
            <person name="Porwollik S."/>
            <person name="Prescott A.M."/>
            <person name="Presecan E."/>
            <person name="Pujic P."/>
            <person name="Purnelle B."/>
            <person name="Rapoport G."/>
            <person name="Rey M."/>
            <person name="Reynolds S."/>
            <person name="Rieger M."/>
            <person name="Rivolta C."/>
            <person name="Rocha E."/>
            <person name="Roche B."/>
            <person name="Rose M."/>
            <person name="Sadaie Y."/>
            <person name="Sato T."/>
            <person name="Scanlan E."/>
            <person name="Schleich S."/>
            <person name="Schroeter R."/>
            <person name="Scoffone F."/>
            <person name="Sekiguchi J."/>
            <person name="Sekowska A."/>
            <person name="Seror S.J."/>
            <person name="Serror P."/>
            <person name="Shin B.-S."/>
            <person name="Soldo B."/>
            <person name="Sorokin A."/>
            <person name="Tacconi E."/>
            <person name="Takagi T."/>
            <person name="Takahashi H."/>
            <person name="Takemaru K."/>
            <person name="Takeuchi M."/>
            <person name="Tamakoshi A."/>
            <person name="Tanaka T."/>
            <person name="Terpstra P."/>
            <person name="Tognoni A."/>
            <person name="Tosato V."/>
            <person name="Uchiyama S."/>
            <person name="Vandenbol M."/>
            <person name="Vannier F."/>
            <person name="Vassarotti A."/>
            <person name="Viari A."/>
            <person name="Wambutt R."/>
            <person name="Wedler E."/>
            <person name="Wedler H."/>
            <person name="Weitzenegger T."/>
            <person name="Winters P."/>
            <person name="Wipat A."/>
            <person name="Yamamoto H."/>
            <person name="Yamane K."/>
            <person name="Yasumoto K."/>
            <person name="Yata K."/>
            <person name="Yoshida K."/>
            <person name="Yoshikawa H.-F."/>
            <person name="Zumstein E."/>
            <person name="Yoshikawa H."/>
            <person name="Danchin A."/>
        </authorList>
    </citation>
    <scope>NUCLEOTIDE SEQUENCE [LARGE SCALE GENOMIC DNA]</scope>
    <source>
        <strain>168</strain>
    </source>
</reference>